<protein>
    <recommendedName>
        <fullName evidence="6">Cholesterol 7-desaturase nvd</fullName>
        <ecNumber evidence="3">1.14.19.21</ecNumber>
    </recommendedName>
    <alternativeName>
        <fullName evidence="4">Protein neverland</fullName>
        <shortName evidence="4">Nvd protein</shortName>
        <shortName evidence="4">nvd-Xl</shortName>
    </alternativeName>
</protein>
<keyword id="KW-0001">2Fe-2S</keyword>
<keyword id="KW-0408">Iron</keyword>
<keyword id="KW-0411">Iron-sulfur</keyword>
<keyword id="KW-0472">Membrane</keyword>
<keyword id="KW-0479">Metal-binding</keyword>
<keyword id="KW-0560">Oxidoreductase</keyword>
<keyword id="KW-1185">Reference proteome</keyword>
<keyword id="KW-0812">Transmembrane</keyword>
<keyword id="KW-1133">Transmembrane helix</keyword>
<name>NVD_XENLA</name>
<organism>
    <name type="scientific">Xenopus laevis</name>
    <name type="common">African clawed frog</name>
    <dbReference type="NCBI Taxonomy" id="8355"/>
    <lineage>
        <taxon>Eukaryota</taxon>
        <taxon>Metazoa</taxon>
        <taxon>Chordata</taxon>
        <taxon>Craniata</taxon>
        <taxon>Vertebrata</taxon>
        <taxon>Euteleostomi</taxon>
        <taxon>Amphibia</taxon>
        <taxon>Batrachia</taxon>
        <taxon>Anura</taxon>
        <taxon>Pipoidea</taxon>
        <taxon>Pipidae</taxon>
        <taxon>Xenopodinae</taxon>
        <taxon>Xenopus</taxon>
        <taxon>Xenopus</taxon>
    </lineage>
</organism>
<feature type="chain" id="PRO_0000451465" description="Cholesterol 7-desaturase nvd">
    <location>
        <begin position="1"/>
        <end position="454"/>
    </location>
</feature>
<feature type="transmembrane region" description="Helical" evidence="1">
    <location>
        <begin position="13"/>
        <end position="33"/>
    </location>
</feature>
<feature type="transmembrane region" description="Helical" evidence="1">
    <location>
        <begin position="47"/>
        <end position="67"/>
    </location>
</feature>
<feature type="domain" description="Rieske" evidence="2">
    <location>
        <begin position="117"/>
        <end position="221"/>
    </location>
</feature>
<feature type="binding site" evidence="2">
    <location>
        <position position="158"/>
    </location>
    <ligand>
        <name>[2Fe-2S] cluster</name>
        <dbReference type="ChEBI" id="CHEBI:190135"/>
    </ligand>
</feature>
<feature type="binding site" evidence="2">
    <location>
        <position position="160"/>
    </location>
    <ligand>
        <name>[2Fe-2S] cluster</name>
        <dbReference type="ChEBI" id="CHEBI:190135"/>
    </ligand>
</feature>
<feature type="binding site" evidence="2">
    <location>
        <position position="178"/>
    </location>
    <ligand>
        <name>[2Fe-2S] cluster</name>
        <dbReference type="ChEBI" id="CHEBI:190135"/>
    </ligand>
</feature>
<feature type="binding site" evidence="2">
    <location>
        <position position="181"/>
    </location>
    <ligand>
        <name>[2Fe-2S] cluster</name>
        <dbReference type="ChEBI" id="CHEBI:190135"/>
    </ligand>
</feature>
<proteinExistence type="evidence at protein level"/>
<sequence>MESVGHSLLTLSVLCPVGALLLCWVGSVLLGAGLLPSLTLSTRDPSTTLSRTPWLVVLVPLLVLWGWRWLSRPMELLRSPEEVGYIPERGRSRAQTANLVRRRRMKGELPPIYPNGWYRALDSHLLPPGTVQDCTLLGEQLAVYRTLEGKVYVVDAYCPHLGANLAVGGKVVGDCIECPFHGWQFRGEDGKCTRIPYAEKVPDFAKIKTRPSCELNGMVFVWYHCDGIEPTWSVPEQEEITKKEWVYHGRTEHYVNAHIEEIPENAADIAHLDFLHTPGILSGVDLRYTKSRIWDFVKHSWKVQWIPEPAPNKHCSQMLLAHSILLFGKHFPLLDVNVVARQVGPGIVFLHFKHAFLGEGVIVHCVTPVEPLLQKVSHSIYYQKNIPALIPKFILKAECIQFERDVMIWNNKKYISKPMLVKEDAAIQKHRRWFSQFYSNNSPQITFQQEGLDW</sequence>
<accession>F7J184</accession>
<evidence type="ECO:0000255" key="1"/>
<evidence type="ECO:0000255" key="2">
    <source>
        <dbReference type="PROSITE-ProRule" id="PRU00628"/>
    </source>
</evidence>
<evidence type="ECO:0000269" key="3">
    <source>
    </source>
</evidence>
<evidence type="ECO:0000303" key="4">
    <source>
    </source>
</evidence>
<evidence type="ECO:0000303" key="5">
    <source>
    </source>
</evidence>
<evidence type="ECO:0000305" key="6"/>
<evidence type="ECO:0000305" key="7">
    <source>
    </source>
</evidence>
<reference key="1">
    <citation type="journal article" date="2011" name="J. Biol. Chem.">
        <title>The conserved Rieske oxygenase DAF-36/Neverland is a novel cholesterol-metabolizing enzyme.</title>
        <authorList>
            <person name="Yoshiyama-Yanagawa T."/>
            <person name="Enya S."/>
            <person name="Shimada-Niwa Y."/>
            <person name="Yaguchi S."/>
            <person name="Haramoto Y."/>
            <person name="Matsuya T."/>
            <person name="Shiomi K."/>
            <person name="Sasakura Y."/>
            <person name="Takahashi S."/>
            <person name="Asashima M."/>
            <person name="Kataoka H."/>
            <person name="Niwa R."/>
        </authorList>
    </citation>
    <scope>NUCLEOTIDE SEQUENCE [MRNA]</scope>
    <scope>CATALYTIC ACTIVITY</scope>
    <scope>FUNCTION</scope>
    <source>
        <tissue>Embryo</tissue>
    </source>
</reference>
<reference key="2">
    <citation type="journal article" date="2016" name="Nature">
        <title>Genome evolution in the allotetraploid frog Xenopus laevis.</title>
        <authorList>
            <person name="Session A.M."/>
            <person name="Uno Y."/>
            <person name="Kwon T."/>
            <person name="Chapman J.A."/>
            <person name="Toyoda A."/>
            <person name="Takahashi S."/>
            <person name="Fukui A."/>
            <person name="Hikosaka A."/>
            <person name="Suzuki A."/>
            <person name="Kondo M."/>
            <person name="van Heeringen S.J."/>
            <person name="Quigley I."/>
            <person name="Heinz S."/>
            <person name="Ogino H."/>
            <person name="Ochi H."/>
            <person name="Hellsten U."/>
            <person name="Lyons J.B."/>
            <person name="Simakov O."/>
            <person name="Putnam N."/>
            <person name="Stites J."/>
            <person name="Kuroki Y."/>
            <person name="Tanaka T."/>
            <person name="Michiue T."/>
            <person name="Watanabe M."/>
            <person name="Bogdanovic O."/>
            <person name="Lister R."/>
            <person name="Georgiou G."/>
            <person name="Paranjpe S.S."/>
            <person name="van Kruijsbergen I."/>
            <person name="Shu S."/>
            <person name="Carlson J."/>
            <person name="Kinoshita T."/>
            <person name="Ohta Y."/>
            <person name="Mawaribuchi S."/>
            <person name="Jenkins J."/>
            <person name="Grimwood J."/>
            <person name="Schmutz J."/>
            <person name="Mitros T."/>
            <person name="Mozaffari S.V."/>
            <person name="Suzuki Y."/>
            <person name="Haramoto Y."/>
            <person name="Yamamoto T.S."/>
            <person name="Takagi C."/>
            <person name="Heald R."/>
            <person name="Miller K."/>
            <person name="Haudenschild C."/>
            <person name="Kitzman J."/>
            <person name="Nakayama T."/>
            <person name="Izutsu Y."/>
            <person name="Robert J."/>
            <person name="Fortriede J."/>
            <person name="Burns K."/>
            <person name="Lotay V."/>
            <person name="Karimi K."/>
            <person name="Yasuoka Y."/>
            <person name="Dichmann D.S."/>
            <person name="Flajnik M.F."/>
            <person name="Houston D.W."/>
            <person name="Shendure J."/>
            <person name="DuPasquier L."/>
            <person name="Vize P.D."/>
            <person name="Zorn A.M."/>
            <person name="Ito M."/>
            <person name="Marcotte E.M."/>
            <person name="Wallingford J.B."/>
            <person name="Ito Y."/>
            <person name="Asashima M."/>
            <person name="Ueno N."/>
            <person name="Matsuda Y."/>
            <person name="Veenstra G.J."/>
            <person name="Fujiyama A."/>
            <person name="Harland R.M."/>
            <person name="Taira M."/>
            <person name="Rokhsar D.S."/>
        </authorList>
    </citation>
    <scope>NUCLEOTIDE SEQUENCE [LARGE SCALE GENOMIC DNA]</scope>
    <source>
        <strain>J</strain>
    </source>
</reference>
<gene>
    <name type="primary">nvd</name>
    <name evidence="5" type="ORF">XELAEV_18041408mg</name>
</gene>
<dbReference type="EC" id="1.14.19.21" evidence="3"/>
<dbReference type="EMBL" id="AB607950">
    <property type="protein sequence ID" value="BAK39959.1"/>
    <property type="molecule type" value="mRNA"/>
</dbReference>
<dbReference type="EMBL" id="CM004481">
    <property type="protein sequence ID" value="OCT65169.1"/>
    <property type="molecule type" value="Genomic_DNA"/>
</dbReference>
<dbReference type="SMR" id="F7J184"/>
<dbReference type="STRING" id="8355.F7J184"/>
<dbReference type="SwissLipids" id="SLP:000000091"/>
<dbReference type="PaxDb" id="8355-F7J184"/>
<dbReference type="AGR" id="Xenbase:XB-GENE-6079348"/>
<dbReference type="Xenbase" id="XB-GENE-6079348">
    <property type="gene designation" value="XB5992703.S"/>
</dbReference>
<dbReference type="OMA" id="AVYQMRR"/>
<dbReference type="BRENDA" id="1.14.19.21">
    <property type="organism ID" value="6725"/>
</dbReference>
<dbReference type="UniPathway" id="UPA01020"/>
<dbReference type="Proteomes" id="UP000186698">
    <property type="component" value="Unplaced"/>
</dbReference>
<dbReference type="Proteomes" id="UP000694892">
    <property type="component" value="Chromosome 8S"/>
</dbReference>
<dbReference type="GO" id="GO:0005737">
    <property type="term" value="C:cytoplasm"/>
    <property type="evidence" value="ECO:0000318"/>
    <property type="project" value="GO_Central"/>
</dbReference>
<dbReference type="GO" id="GO:0016020">
    <property type="term" value="C:membrane"/>
    <property type="evidence" value="ECO:0007669"/>
    <property type="project" value="UniProtKB-SubCell"/>
</dbReference>
<dbReference type="GO" id="GO:0051537">
    <property type="term" value="F:2 iron, 2 sulfur cluster binding"/>
    <property type="evidence" value="ECO:0007669"/>
    <property type="project" value="UniProtKB-KW"/>
</dbReference>
<dbReference type="GO" id="GO:0170056">
    <property type="term" value="F:cholesterol 7-desaturase (NAD(P)H) activity"/>
    <property type="evidence" value="ECO:0007669"/>
    <property type="project" value="UniProtKB-EC"/>
</dbReference>
<dbReference type="GO" id="GO:0046872">
    <property type="term" value="F:metal ion binding"/>
    <property type="evidence" value="ECO:0007669"/>
    <property type="project" value="UniProtKB-KW"/>
</dbReference>
<dbReference type="GO" id="GO:0016491">
    <property type="term" value="F:oxidoreductase activity"/>
    <property type="evidence" value="ECO:0000318"/>
    <property type="project" value="GO_Central"/>
</dbReference>
<dbReference type="GO" id="GO:0008203">
    <property type="term" value="P:cholesterol metabolic process"/>
    <property type="evidence" value="ECO:0007669"/>
    <property type="project" value="InterPro"/>
</dbReference>
<dbReference type="CDD" id="cd03469">
    <property type="entry name" value="Rieske_RO_Alpha_N"/>
    <property type="match status" value="1"/>
</dbReference>
<dbReference type="Gene3D" id="3.90.380.10">
    <property type="entry name" value="Naphthalene 1,2-dioxygenase Alpha Subunit, Chain A, domain 1"/>
    <property type="match status" value="1"/>
</dbReference>
<dbReference type="Gene3D" id="2.102.10.10">
    <property type="entry name" value="Rieske [2Fe-2S] iron-sulphur domain"/>
    <property type="match status" value="1"/>
</dbReference>
<dbReference type="InterPro" id="IPR050584">
    <property type="entry name" value="Cholesterol_7-desaturase"/>
</dbReference>
<dbReference type="InterPro" id="IPR045605">
    <property type="entry name" value="KshA-like_C"/>
</dbReference>
<dbReference type="InterPro" id="IPR017941">
    <property type="entry name" value="Rieske_2Fe-2S"/>
</dbReference>
<dbReference type="InterPro" id="IPR036922">
    <property type="entry name" value="Rieske_2Fe-2S_sf"/>
</dbReference>
<dbReference type="PANTHER" id="PTHR21266:SF32">
    <property type="entry name" value="CHOLESTEROL 7-DESATURASE NVD"/>
    <property type="match status" value="1"/>
</dbReference>
<dbReference type="PANTHER" id="PTHR21266">
    <property type="entry name" value="IRON-SULFUR DOMAIN CONTAINING PROTEIN"/>
    <property type="match status" value="1"/>
</dbReference>
<dbReference type="Pfam" id="PF19298">
    <property type="entry name" value="KshA_C"/>
    <property type="match status" value="1"/>
</dbReference>
<dbReference type="Pfam" id="PF00355">
    <property type="entry name" value="Rieske"/>
    <property type="match status" value="1"/>
</dbReference>
<dbReference type="SUPFAM" id="SSF55961">
    <property type="entry name" value="Bet v1-like"/>
    <property type="match status" value="1"/>
</dbReference>
<dbReference type="SUPFAM" id="SSF50022">
    <property type="entry name" value="ISP domain"/>
    <property type="match status" value="1"/>
</dbReference>
<dbReference type="PROSITE" id="PS51296">
    <property type="entry name" value="RIESKE"/>
    <property type="match status" value="1"/>
</dbReference>
<comment type="function">
    <text evidence="3">Catalyzes the production of 7-dehydrocholesterol (7-DHC or cholesta-5,7-dien-3beta-ol) by inserting a double bond (desaturating) at the C7-C8 single bond of cholesterol. This reaction is the first step in the synthesis of the steroid hormone Delta(7)-dafachronic acid.</text>
</comment>
<comment type="catalytic activity">
    <reaction evidence="3">
        <text>cholesterol + NADPH + O2 + H(+) = 7-dehydrocholesterol + NADP(+) + 2 H2O</text>
        <dbReference type="Rhea" id="RHEA:45024"/>
        <dbReference type="ChEBI" id="CHEBI:15377"/>
        <dbReference type="ChEBI" id="CHEBI:15378"/>
        <dbReference type="ChEBI" id="CHEBI:15379"/>
        <dbReference type="ChEBI" id="CHEBI:16113"/>
        <dbReference type="ChEBI" id="CHEBI:17759"/>
        <dbReference type="ChEBI" id="CHEBI:57783"/>
        <dbReference type="ChEBI" id="CHEBI:58349"/>
        <dbReference type="EC" id="1.14.19.21"/>
    </reaction>
    <physiologicalReaction direction="left-to-right" evidence="7">
        <dbReference type="Rhea" id="RHEA:45025"/>
    </physiologicalReaction>
</comment>
<comment type="catalytic activity">
    <reaction evidence="3">
        <text>cholesterol + NADH + O2 + H(+) = 7-dehydrocholesterol + NAD(+) + 2 H2O</text>
        <dbReference type="Rhea" id="RHEA:51644"/>
        <dbReference type="ChEBI" id="CHEBI:15377"/>
        <dbReference type="ChEBI" id="CHEBI:15378"/>
        <dbReference type="ChEBI" id="CHEBI:15379"/>
        <dbReference type="ChEBI" id="CHEBI:16113"/>
        <dbReference type="ChEBI" id="CHEBI:17759"/>
        <dbReference type="ChEBI" id="CHEBI:57540"/>
        <dbReference type="ChEBI" id="CHEBI:57945"/>
        <dbReference type="EC" id="1.14.19.21"/>
    </reaction>
    <physiologicalReaction direction="left-to-right" evidence="7">
        <dbReference type="Rhea" id="RHEA:51645"/>
    </physiologicalReaction>
</comment>
<comment type="cofactor">
    <cofactor evidence="2">
        <name>[2Fe-2S] cluster</name>
        <dbReference type="ChEBI" id="CHEBI:190135"/>
    </cofactor>
    <text evidence="2">Binds 1 [2Fe-2S] cluster per subunit.</text>
</comment>
<comment type="pathway">
    <text evidence="7">Steroid hormone biosynthesis; dafachronic acid biosynthesis.</text>
</comment>
<comment type="subcellular location">
    <subcellularLocation>
        <location evidence="1">Membrane</location>
        <topology evidence="1">Multi-pass membrane protein</topology>
    </subcellularLocation>
</comment>
<comment type="similarity">
    <text evidence="6">Belongs to the cholesterol 7-desaturase family.</text>
</comment>